<reference key="1">
    <citation type="journal article" date="2008" name="Environ. Microbiol.">
        <title>The genome of Erwinia tasmaniensis strain Et1/99, a non-pathogenic bacterium in the genus Erwinia.</title>
        <authorList>
            <person name="Kube M."/>
            <person name="Migdoll A.M."/>
            <person name="Mueller I."/>
            <person name="Kuhl H."/>
            <person name="Beck A."/>
            <person name="Reinhardt R."/>
            <person name="Geider K."/>
        </authorList>
    </citation>
    <scope>NUCLEOTIDE SEQUENCE [LARGE SCALE GENOMIC DNA]</scope>
    <source>
        <strain>DSM 17950 / CFBP 7177 / CIP 109463 / NCPPB 4357 / Et1/99</strain>
    </source>
</reference>
<evidence type="ECO:0000255" key="1">
    <source>
        <dbReference type="HAMAP-Rule" id="MF_00538"/>
    </source>
</evidence>
<accession>B2VBI5</accession>
<organism>
    <name type="scientific">Erwinia tasmaniensis (strain DSM 17950 / CFBP 7177 / CIP 109463 / NCPPB 4357 / Et1/99)</name>
    <dbReference type="NCBI Taxonomy" id="465817"/>
    <lineage>
        <taxon>Bacteria</taxon>
        <taxon>Pseudomonadati</taxon>
        <taxon>Pseudomonadota</taxon>
        <taxon>Gammaproteobacteria</taxon>
        <taxon>Enterobacterales</taxon>
        <taxon>Erwiniaceae</taxon>
        <taxon>Erwinia</taxon>
    </lineage>
</organism>
<protein>
    <recommendedName>
        <fullName evidence="1">Probable 4-amino-4-deoxy-L-arabinose-phosphoundecaprenol flippase subunit ArnF</fullName>
        <shortName evidence="1">L-Ara4N-phosphoundecaprenol flippase subunit ArnF</shortName>
    </recommendedName>
    <alternativeName>
        <fullName evidence="1">Undecaprenyl phosphate-aminoarabinose flippase subunit ArnF</fullName>
    </alternativeName>
</protein>
<feature type="chain" id="PRO_0000381998" description="Probable 4-amino-4-deoxy-L-arabinose-phosphoundecaprenol flippase subunit ArnF">
    <location>
        <begin position="1"/>
        <end position="127"/>
    </location>
</feature>
<feature type="topological domain" description="Cytoplasmic" evidence="1">
    <location>
        <begin position="1"/>
        <end position="2"/>
    </location>
</feature>
<feature type="transmembrane region" description="Helical" evidence="1">
    <location>
        <begin position="3"/>
        <end position="23"/>
    </location>
</feature>
<feature type="topological domain" description="Periplasmic" evidence="1">
    <location>
        <begin position="24"/>
        <end position="47"/>
    </location>
</feature>
<feature type="transmembrane region" description="Helical" evidence="1">
    <location>
        <begin position="48"/>
        <end position="68"/>
    </location>
</feature>
<feature type="topological domain" description="Cytoplasmic" evidence="1">
    <location>
        <begin position="69"/>
        <end position="76"/>
    </location>
</feature>
<feature type="transmembrane region" description="Helical" evidence="1">
    <location>
        <begin position="77"/>
        <end position="97"/>
    </location>
</feature>
<feature type="topological domain" description="Periplasmic" evidence="1">
    <location>
        <begin position="98"/>
        <end position="102"/>
    </location>
</feature>
<feature type="transmembrane region" description="Helical" evidence="1">
    <location>
        <begin position="103"/>
        <end position="123"/>
    </location>
</feature>
<feature type="topological domain" description="Cytoplasmic" evidence="1">
    <location>
        <begin position="124"/>
        <end position="127"/>
    </location>
</feature>
<gene>
    <name evidence="1" type="primary">arnF</name>
    <name type="ordered locus">ETA_23770</name>
</gene>
<proteinExistence type="inferred from homology"/>
<comment type="function">
    <text evidence="1">Translocates 4-amino-4-deoxy-L-arabinose-phosphoundecaprenol (alpha-L-Ara4N-phosphoundecaprenol) from the cytoplasmic to the periplasmic side of the inner membrane.</text>
</comment>
<comment type="pathway">
    <text evidence="1">Bacterial outer membrane biogenesis; lipopolysaccharide biosynthesis.</text>
</comment>
<comment type="subunit">
    <text evidence="1">Heterodimer of ArnE and ArnF.</text>
</comment>
<comment type="subcellular location">
    <subcellularLocation>
        <location evidence="1">Cell inner membrane</location>
        <topology evidence="1">Multi-pass membrane protein</topology>
    </subcellularLocation>
</comment>
<comment type="similarity">
    <text evidence="1">Belongs to the ArnF family.</text>
</comment>
<sequence length="127" mass="13862">MGLLFALGSVVLVSAAQLLLKWAMIQLPDISQLPQFLSSLSQFPLPTAALFLGLLAYALSMLCWLLALKRLPLSRAYPLLSLSYLLVWLAALWLPGLNEVFRWGKLAGAGLIVSGLLLICWPAAKTR</sequence>
<dbReference type="EMBL" id="CU468135">
    <property type="protein sequence ID" value="CAO97423.1"/>
    <property type="molecule type" value="Genomic_DNA"/>
</dbReference>
<dbReference type="RefSeq" id="WP_012442091.1">
    <property type="nucleotide sequence ID" value="NC_010694.1"/>
</dbReference>
<dbReference type="STRING" id="465817.ETA_23770"/>
<dbReference type="KEGG" id="eta:ETA_23770"/>
<dbReference type="eggNOG" id="COG2076">
    <property type="taxonomic scope" value="Bacteria"/>
</dbReference>
<dbReference type="HOGENOM" id="CLU_131462_1_0_6"/>
<dbReference type="OrthoDB" id="5592809at2"/>
<dbReference type="UniPathway" id="UPA00030"/>
<dbReference type="Proteomes" id="UP000001726">
    <property type="component" value="Chromosome"/>
</dbReference>
<dbReference type="GO" id="GO:0005886">
    <property type="term" value="C:plasma membrane"/>
    <property type="evidence" value="ECO:0007669"/>
    <property type="project" value="UniProtKB-SubCell"/>
</dbReference>
<dbReference type="GO" id="GO:1901505">
    <property type="term" value="F:carbohydrate derivative transmembrane transporter activity"/>
    <property type="evidence" value="ECO:0007669"/>
    <property type="project" value="InterPro"/>
</dbReference>
<dbReference type="GO" id="GO:0009245">
    <property type="term" value="P:lipid A biosynthetic process"/>
    <property type="evidence" value="ECO:0007669"/>
    <property type="project" value="UniProtKB-UniRule"/>
</dbReference>
<dbReference type="GO" id="GO:0009103">
    <property type="term" value="P:lipopolysaccharide biosynthetic process"/>
    <property type="evidence" value="ECO:0007669"/>
    <property type="project" value="UniProtKB-UniRule"/>
</dbReference>
<dbReference type="Gene3D" id="1.10.3730.20">
    <property type="match status" value="1"/>
</dbReference>
<dbReference type="HAMAP" id="MF_00538">
    <property type="entry name" value="Flippase_ArnF"/>
    <property type="match status" value="1"/>
</dbReference>
<dbReference type="InterPro" id="IPR022832">
    <property type="entry name" value="Flippase_ArnF"/>
</dbReference>
<dbReference type="InterPro" id="IPR000390">
    <property type="entry name" value="Small_drug/metabolite_transptr"/>
</dbReference>
<dbReference type="NCBIfam" id="NF002816">
    <property type="entry name" value="PRK02971.1-2"/>
    <property type="match status" value="1"/>
</dbReference>
<dbReference type="PANTHER" id="PTHR30561:SF9">
    <property type="entry name" value="4-AMINO-4-DEOXY-L-ARABINOSE-PHOSPHOUNDECAPRENOL FLIPPASE SUBUNIT ARNF-RELATED"/>
    <property type="match status" value="1"/>
</dbReference>
<dbReference type="PANTHER" id="PTHR30561">
    <property type="entry name" value="SMR FAMILY PROTON-DEPENDENT DRUG EFFLUX TRANSPORTER SUGE"/>
    <property type="match status" value="1"/>
</dbReference>
<dbReference type="SUPFAM" id="SSF103481">
    <property type="entry name" value="Multidrug resistance efflux transporter EmrE"/>
    <property type="match status" value="1"/>
</dbReference>
<keyword id="KW-0997">Cell inner membrane</keyword>
<keyword id="KW-1003">Cell membrane</keyword>
<keyword id="KW-0441">Lipid A biosynthesis</keyword>
<keyword id="KW-0444">Lipid biosynthesis</keyword>
<keyword id="KW-0443">Lipid metabolism</keyword>
<keyword id="KW-0448">Lipopolysaccharide biosynthesis</keyword>
<keyword id="KW-0472">Membrane</keyword>
<keyword id="KW-1185">Reference proteome</keyword>
<keyword id="KW-0812">Transmembrane</keyword>
<keyword id="KW-1133">Transmembrane helix</keyword>
<keyword id="KW-0813">Transport</keyword>
<name>ARNF_ERWT9</name>